<keyword id="KW-0963">Cytoplasm</keyword>
<keyword id="KW-0255">Endonuclease</keyword>
<keyword id="KW-0378">Hydrolase</keyword>
<keyword id="KW-0464">Manganese</keyword>
<keyword id="KW-0479">Metal-binding</keyword>
<keyword id="KW-0540">Nuclease</keyword>
<keyword id="KW-1185">Reference proteome</keyword>
<sequence>MKAYTAAGLDEVGRGALFGPVFAGAVILDNQAEDQLIDAGLKDSKKLSALKRSNLVPLIKKISHCWAIGQSSAREIDLLGIRNATEKAMIRAVHRLEKQPDVLLIDGCLNLRLWHGEQKTVIKGEDLYPSIAAASVLAKVARDDLIKRMAEKYPQYGLEKHVGYGTALHRAAISKFGKTKLHRKTFLSKIQ</sequence>
<comment type="function">
    <text evidence="1">Endonuclease that specifically degrades the RNA of RNA-DNA hybrids.</text>
</comment>
<comment type="catalytic activity">
    <reaction evidence="1">
        <text>Endonucleolytic cleavage to 5'-phosphomonoester.</text>
        <dbReference type="EC" id="3.1.26.4"/>
    </reaction>
</comment>
<comment type="cofactor">
    <cofactor evidence="1">
        <name>Mn(2+)</name>
        <dbReference type="ChEBI" id="CHEBI:29035"/>
    </cofactor>
    <cofactor evidence="1">
        <name>Mg(2+)</name>
        <dbReference type="ChEBI" id="CHEBI:18420"/>
    </cofactor>
    <text evidence="1">Manganese or magnesium. Binds 1 divalent metal ion per monomer in the absence of substrate. May bind a second metal ion after substrate binding.</text>
</comment>
<comment type="subcellular location">
    <subcellularLocation>
        <location evidence="1">Cytoplasm</location>
    </subcellularLocation>
</comment>
<comment type="similarity">
    <text evidence="1">Belongs to the RNase HII family.</text>
</comment>
<comment type="caution">
    <text evidence="3">Glu-125 is present instead of the conserved Asp which is expected to be an active site residue.</text>
</comment>
<reference key="1">
    <citation type="journal article" date="2003" name="Proc. Natl. Acad. Sci. U.S.A.">
        <title>Genome sequence of the cyanobacterium Prochlorococcus marinus SS120, a nearly minimal oxyphototrophic genome.</title>
        <authorList>
            <person name="Dufresne A."/>
            <person name="Salanoubat M."/>
            <person name="Partensky F."/>
            <person name="Artiguenave F."/>
            <person name="Axmann I.M."/>
            <person name="Barbe V."/>
            <person name="Duprat S."/>
            <person name="Galperin M.Y."/>
            <person name="Koonin E.V."/>
            <person name="Le Gall F."/>
            <person name="Makarova K.S."/>
            <person name="Ostrowski M."/>
            <person name="Oztas S."/>
            <person name="Robert C."/>
            <person name="Rogozin I.B."/>
            <person name="Scanlan D.J."/>
            <person name="Tandeau de Marsac N."/>
            <person name="Weissenbach J."/>
            <person name="Wincker P."/>
            <person name="Wolf Y.I."/>
            <person name="Hess W.R."/>
        </authorList>
    </citation>
    <scope>NUCLEOTIDE SEQUENCE [LARGE SCALE GENOMIC DNA]</scope>
    <source>
        <strain>SARG / CCMP1375 / SS120</strain>
    </source>
</reference>
<protein>
    <recommendedName>
        <fullName evidence="1">Ribonuclease HII</fullName>
        <shortName evidence="1">RNase HII</shortName>
        <ecNumber evidence="1">3.1.26.4</ecNumber>
    </recommendedName>
</protein>
<evidence type="ECO:0000255" key="1">
    <source>
        <dbReference type="HAMAP-Rule" id="MF_00052"/>
    </source>
</evidence>
<evidence type="ECO:0000255" key="2">
    <source>
        <dbReference type="PROSITE-ProRule" id="PRU01319"/>
    </source>
</evidence>
<evidence type="ECO:0000305" key="3"/>
<accession>Q7VA11</accession>
<name>RNH2_PROMA</name>
<dbReference type="EC" id="3.1.26.4" evidence="1"/>
<dbReference type="EMBL" id="AE017126">
    <property type="protein sequence ID" value="AAQ00702.1"/>
    <property type="molecule type" value="Genomic_DNA"/>
</dbReference>
<dbReference type="RefSeq" id="NP_876049.1">
    <property type="nucleotide sequence ID" value="NC_005042.1"/>
</dbReference>
<dbReference type="RefSeq" id="WP_011125808.1">
    <property type="nucleotide sequence ID" value="NC_005042.1"/>
</dbReference>
<dbReference type="SMR" id="Q7VA11"/>
<dbReference type="STRING" id="167539.Pro_1658"/>
<dbReference type="EnsemblBacteria" id="AAQ00702">
    <property type="protein sequence ID" value="AAQ00702"/>
    <property type="gene ID" value="Pro_1658"/>
</dbReference>
<dbReference type="KEGG" id="pma:Pro_1658"/>
<dbReference type="PATRIC" id="fig|167539.5.peg.1751"/>
<dbReference type="eggNOG" id="COG0164">
    <property type="taxonomic scope" value="Bacteria"/>
</dbReference>
<dbReference type="HOGENOM" id="CLU_036532_3_1_3"/>
<dbReference type="OrthoDB" id="9803420at2"/>
<dbReference type="Proteomes" id="UP000001420">
    <property type="component" value="Chromosome"/>
</dbReference>
<dbReference type="GO" id="GO:0005737">
    <property type="term" value="C:cytoplasm"/>
    <property type="evidence" value="ECO:0007669"/>
    <property type="project" value="UniProtKB-SubCell"/>
</dbReference>
<dbReference type="GO" id="GO:0032299">
    <property type="term" value="C:ribonuclease H2 complex"/>
    <property type="evidence" value="ECO:0007669"/>
    <property type="project" value="TreeGrafter"/>
</dbReference>
<dbReference type="GO" id="GO:0030145">
    <property type="term" value="F:manganese ion binding"/>
    <property type="evidence" value="ECO:0007669"/>
    <property type="project" value="UniProtKB-UniRule"/>
</dbReference>
<dbReference type="GO" id="GO:0003723">
    <property type="term" value="F:RNA binding"/>
    <property type="evidence" value="ECO:0007669"/>
    <property type="project" value="InterPro"/>
</dbReference>
<dbReference type="GO" id="GO:0004523">
    <property type="term" value="F:RNA-DNA hybrid ribonuclease activity"/>
    <property type="evidence" value="ECO:0007669"/>
    <property type="project" value="UniProtKB-UniRule"/>
</dbReference>
<dbReference type="GO" id="GO:0043137">
    <property type="term" value="P:DNA replication, removal of RNA primer"/>
    <property type="evidence" value="ECO:0007669"/>
    <property type="project" value="TreeGrafter"/>
</dbReference>
<dbReference type="GO" id="GO:0006298">
    <property type="term" value="P:mismatch repair"/>
    <property type="evidence" value="ECO:0007669"/>
    <property type="project" value="TreeGrafter"/>
</dbReference>
<dbReference type="CDD" id="cd07182">
    <property type="entry name" value="RNase_HII_bacteria_HII_like"/>
    <property type="match status" value="1"/>
</dbReference>
<dbReference type="Gene3D" id="3.30.420.10">
    <property type="entry name" value="Ribonuclease H-like superfamily/Ribonuclease H"/>
    <property type="match status" value="1"/>
</dbReference>
<dbReference type="HAMAP" id="MF_00052_B">
    <property type="entry name" value="RNase_HII_B"/>
    <property type="match status" value="1"/>
</dbReference>
<dbReference type="InterPro" id="IPR022898">
    <property type="entry name" value="RNase_HII"/>
</dbReference>
<dbReference type="InterPro" id="IPR001352">
    <property type="entry name" value="RNase_HII/HIII"/>
</dbReference>
<dbReference type="InterPro" id="IPR024567">
    <property type="entry name" value="RNase_HII/HIII_dom"/>
</dbReference>
<dbReference type="InterPro" id="IPR012337">
    <property type="entry name" value="RNaseH-like_sf"/>
</dbReference>
<dbReference type="InterPro" id="IPR036397">
    <property type="entry name" value="RNaseH_sf"/>
</dbReference>
<dbReference type="NCBIfam" id="NF000595">
    <property type="entry name" value="PRK00015.1-3"/>
    <property type="match status" value="1"/>
</dbReference>
<dbReference type="NCBIfam" id="NF010537">
    <property type="entry name" value="PRK13925.1"/>
    <property type="match status" value="1"/>
</dbReference>
<dbReference type="PANTHER" id="PTHR10954">
    <property type="entry name" value="RIBONUCLEASE H2 SUBUNIT A"/>
    <property type="match status" value="1"/>
</dbReference>
<dbReference type="PANTHER" id="PTHR10954:SF18">
    <property type="entry name" value="RIBONUCLEASE HII"/>
    <property type="match status" value="1"/>
</dbReference>
<dbReference type="Pfam" id="PF01351">
    <property type="entry name" value="RNase_HII"/>
    <property type="match status" value="1"/>
</dbReference>
<dbReference type="SUPFAM" id="SSF53098">
    <property type="entry name" value="Ribonuclease H-like"/>
    <property type="match status" value="1"/>
</dbReference>
<dbReference type="PROSITE" id="PS51975">
    <property type="entry name" value="RNASE_H_2"/>
    <property type="match status" value="1"/>
</dbReference>
<proteinExistence type="inferred from homology"/>
<feature type="chain" id="PRO_0000111602" description="Ribonuclease HII">
    <location>
        <begin position="1"/>
        <end position="191"/>
    </location>
</feature>
<feature type="domain" description="RNase H type-2" evidence="2">
    <location>
        <begin position="4"/>
        <end position="191"/>
    </location>
</feature>
<feature type="binding site" evidence="1">
    <location>
        <position position="10"/>
    </location>
    <ligand>
        <name>a divalent metal cation</name>
        <dbReference type="ChEBI" id="CHEBI:60240"/>
    </ligand>
</feature>
<feature type="binding site" evidence="1">
    <location>
        <position position="11"/>
    </location>
    <ligand>
        <name>a divalent metal cation</name>
        <dbReference type="ChEBI" id="CHEBI:60240"/>
    </ligand>
</feature>
<feature type="binding site" evidence="1">
    <location>
        <position position="106"/>
    </location>
    <ligand>
        <name>a divalent metal cation</name>
        <dbReference type="ChEBI" id="CHEBI:60240"/>
    </ligand>
</feature>
<gene>
    <name evidence="1" type="primary">rnhB</name>
    <name type="ordered locus">Pro_1658</name>
</gene>
<organism>
    <name type="scientific">Prochlorococcus marinus (strain SARG / CCMP1375 / SS120)</name>
    <dbReference type="NCBI Taxonomy" id="167539"/>
    <lineage>
        <taxon>Bacteria</taxon>
        <taxon>Bacillati</taxon>
        <taxon>Cyanobacteriota</taxon>
        <taxon>Cyanophyceae</taxon>
        <taxon>Synechococcales</taxon>
        <taxon>Prochlorococcaceae</taxon>
        <taxon>Prochlorococcus</taxon>
    </lineage>
</organism>